<accession>Q32E52</accession>
<gene>
    <name evidence="1" type="primary">pncB</name>
    <name type="ordered locus">SDY_2326</name>
</gene>
<sequence length="400" mass="45926">MTQFASPVLHSLLDTDAYKLHMQQAVFHHYYDVHVAAEFRCRGDDLLGIYADAIREQVQAMQHLRLQDDEYQWLSALPFFKADYLNWLRKFRFNPEQVTVSNDNGKLDIRLSGPWREVILWEVPLLAVISEMVHRYRSPQADVAQALDTLESKLVDFSALTAGLDMSRFHLMDFGTRRRFSREVQETIVKRLQQESWFVGTSNYDLARRLSLTPMGTQAHEWFQAHQQISPDLANSQRAALAAWLEEYPDQLGIALTDCITMDAFLRDFGVEFASRYQGLRHDSGDPVEWGEKAIAHYEKLGIDPQSKTLVFSDNLDLRKAVELYRHFSSRVQLSFGIGTRLTCDIPQVKPLNIVIKLVECNGKPVAKLSDSPSKTICHDKAFVRALRKAFDLPHIKKAS</sequence>
<reference key="1">
    <citation type="journal article" date="2005" name="Nucleic Acids Res.">
        <title>Genome dynamics and diversity of Shigella species, the etiologic agents of bacillary dysentery.</title>
        <authorList>
            <person name="Yang F."/>
            <person name="Yang J."/>
            <person name="Zhang X."/>
            <person name="Chen L."/>
            <person name="Jiang Y."/>
            <person name="Yan Y."/>
            <person name="Tang X."/>
            <person name="Wang J."/>
            <person name="Xiong Z."/>
            <person name="Dong J."/>
            <person name="Xue Y."/>
            <person name="Zhu Y."/>
            <person name="Xu X."/>
            <person name="Sun L."/>
            <person name="Chen S."/>
            <person name="Nie H."/>
            <person name="Peng J."/>
            <person name="Xu J."/>
            <person name="Wang Y."/>
            <person name="Yuan Z."/>
            <person name="Wen Y."/>
            <person name="Yao Z."/>
            <person name="Shen Y."/>
            <person name="Qiang B."/>
            <person name="Hou Y."/>
            <person name="Yu J."/>
            <person name="Jin Q."/>
        </authorList>
    </citation>
    <scope>NUCLEOTIDE SEQUENCE [LARGE SCALE GENOMIC DNA]</scope>
    <source>
        <strain>Sd197</strain>
    </source>
</reference>
<evidence type="ECO:0000255" key="1">
    <source>
        <dbReference type="HAMAP-Rule" id="MF_00570"/>
    </source>
</evidence>
<protein>
    <recommendedName>
        <fullName evidence="1">Nicotinate phosphoribosyltransferase</fullName>
        <shortName evidence="1">NAPRTase</shortName>
        <ecNumber evidence="1">6.3.4.21</ecNumber>
    </recommendedName>
</protein>
<dbReference type="EC" id="6.3.4.21" evidence="1"/>
<dbReference type="EMBL" id="CP000034">
    <property type="protein sequence ID" value="ABB62403.1"/>
    <property type="molecule type" value="Genomic_DNA"/>
</dbReference>
<dbReference type="RefSeq" id="WP_005021568.1">
    <property type="nucleotide sequence ID" value="NC_007606.1"/>
</dbReference>
<dbReference type="RefSeq" id="YP_403894.1">
    <property type="nucleotide sequence ID" value="NC_007606.1"/>
</dbReference>
<dbReference type="SMR" id="Q32E52"/>
<dbReference type="STRING" id="300267.SDY_2326"/>
<dbReference type="EnsemblBacteria" id="ABB62403">
    <property type="protein sequence ID" value="ABB62403"/>
    <property type="gene ID" value="SDY_2326"/>
</dbReference>
<dbReference type="KEGG" id="sdy:SDY_2326"/>
<dbReference type="PATRIC" id="fig|300267.13.peg.2808"/>
<dbReference type="HOGENOM" id="CLU_030991_1_0_6"/>
<dbReference type="UniPathway" id="UPA00253">
    <property type="reaction ID" value="UER00457"/>
</dbReference>
<dbReference type="Proteomes" id="UP000002716">
    <property type="component" value="Chromosome"/>
</dbReference>
<dbReference type="GO" id="GO:0005829">
    <property type="term" value="C:cytosol"/>
    <property type="evidence" value="ECO:0007669"/>
    <property type="project" value="TreeGrafter"/>
</dbReference>
<dbReference type="GO" id="GO:0004516">
    <property type="term" value="F:nicotinate phosphoribosyltransferase activity"/>
    <property type="evidence" value="ECO:0007669"/>
    <property type="project" value="UniProtKB-UniRule"/>
</dbReference>
<dbReference type="GO" id="GO:0034355">
    <property type="term" value="P:NAD biosynthetic process via the salvage pathway"/>
    <property type="evidence" value="ECO:0007669"/>
    <property type="project" value="TreeGrafter"/>
</dbReference>
<dbReference type="CDD" id="cd01401">
    <property type="entry name" value="PncB_like"/>
    <property type="match status" value="1"/>
</dbReference>
<dbReference type="FunFam" id="3.20.140.10:FF:000001">
    <property type="entry name" value="Nicotinate phosphoribosyltransferase"/>
    <property type="match status" value="1"/>
</dbReference>
<dbReference type="Gene3D" id="3.20.140.10">
    <property type="entry name" value="nicotinate phosphoribosyltransferase"/>
    <property type="match status" value="1"/>
</dbReference>
<dbReference type="HAMAP" id="MF_00570">
    <property type="entry name" value="NAPRTase"/>
    <property type="match status" value="1"/>
</dbReference>
<dbReference type="InterPro" id="IPR041525">
    <property type="entry name" value="N/Namide_PRibTrfase"/>
</dbReference>
<dbReference type="InterPro" id="IPR040727">
    <property type="entry name" value="NAPRTase_N"/>
</dbReference>
<dbReference type="InterPro" id="IPR006406">
    <property type="entry name" value="Nic_PRibTrfase"/>
</dbReference>
<dbReference type="InterPro" id="IPR007229">
    <property type="entry name" value="Nic_PRibTrfase-Fam"/>
</dbReference>
<dbReference type="InterPro" id="IPR036068">
    <property type="entry name" value="Nicotinate_pribotase-like_C"/>
</dbReference>
<dbReference type="NCBIfam" id="TIGR01514">
    <property type="entry name" value="NAPRTase"/>
    <property type="match status" value="1"/>
</dbReference>
<dbReference type="NCBIfam" id="NF003704">
    <property type="entry name" value="PRK05321.1"/>
    <property type="match status" value="1"/>
</dbReference>
<dbReference type="PANTHER" id="PTHR11098">
    <property type="entry name" value="NICOTINATE PHOSPHORIBOSYLTRANSFERASE"/>
    <property type="match status" value="1"/>
</dbReference>
<dbReference type="PANTHER" id="PTHR11098:SF1">
    <property type="entry name" value="NICOTINATE PHOSPHORIBOSYLTRANSFERASE"/>
    <property type="match status" value="1"/>
</dbReference>
<dbReference type="Pfam" id="PF04095">
    <property type="entry name" value="NAPRTase"/>
    <property type="match status" value="1"/>
</dbReference>
<dbReference type="Pfam" id="PF17767">
    <property type="entry name" value="NAPRTase_N"/>
    <property type="match status" value="1"/>
</dbReference>
<dbReference type="PIRSF" id="PIRSF000484">
    <property type="entry name" value="NAPRT"/>
    <property type="match status" value="1"/>
</dbReference>
<dbReference type="SUPFAM" id="SSF51690">
    <property type="entry name" value="Nicotinate/Quinolinate PRTase C-terminal domain-like"/>
    <property type="match status" value="1"/>
</dbReference>
<dbReference type="SUPFAM" id="SSF54675">
    <property type="entry name" value="Nicotinate/Quinolinate PRTase N-terminal domain-like"/>
    <property type="match status" value="1"/>
</dbReference>
<feature type="chain" id="PRO_1000025012" description="Nicotinate phosphoribosyltransferase">
    <location>
        <begin position="1"/>
        <end position="400"/>
    </location>
</feature>
<feature type="modified residue" description="Phosphohistidine; by autocatalysis" evidence="1">
    <location>
        <position position="220"/>
    </location>
</feature>
<organism>
    <name type="scientific">Shigella dysenteriae serotype 1 (strain Sd197)</name>
    <dbReference type="NCBI Taxonomy" id="300267"/>
    <lineage>
        <taxon>Bacteria</taxon>
        <taxon>Pseudomonadati</taxon>
        <taxon>Pseudomonadota</taxon>
        <taxon>Gammaproteobacteria</taxon>
        <taxon>Enterobacterales</taxon>
        <taxon>Enterobacteriaceae</taxon>
        <taxon>Shigella</taxon>
    </lineage>
</organism>
<keyword id="KW-0436">Ligase</keyword>
<keyword id="KW-0597">Phosphoprotein</keyword>
<keyword id="KW-0662">Pyridine nucleotide biosynthesis</keyword>
<keyword id="KW-1185">Reference proteome</keyword>
<proteinExistence type="inferred from homology"/>
<comment type="function">
    <text evidence="1">Catalyzes the synthesis of beta-nicotinate D-ribonucleotide from nicotinate and 5-phospho-D-ribose 1-phosphate at the expense of ATP.</text>
</comment>
<comment type="catalytic activity">
    <reaction evidence="1">
        <text>nicotinate + 5-phospho-alpha-D-ribose 1-diphosphate + ATP + H2O = nicotinate beta-D-ribonucleotide + ADP + phosphate + diphosphate</text>
        <dbReference type="Rhea" id="RHEA:36163"/>
        <dbReference type="ChEBI" id="CHEBI:15377"/>
        <dbReference type="ChEBI" id="CHEBI:30616"/>
        <dbReference type="ChEBI" id="CHEBI:32544"/>
        <dbReference type="ChEBI" id="CHEBI:33019"/>
        <dbReference type="ChEBI" id="CHEBI:43474"/>
        <dbReference type="ChEBI" id="CHEBI:57502"/>
        <dbReference type="ChEBI" id="CHEBI:58017"/>
        <dbReference type="ChEBI" id="CHEBI:456216"/>
        <dbReference type="EC" id="6.3.4.21"/>
    </reaction>
</comment>
<comment type="pathway">
    <text evidence="1">Cofactor biosynthesis; NAD(+) biosynthesis; nicotinate D-ribonucleotide from nicotinate: step 1/1.</text>
</comment>
<comment type="PTM">
    <text evidence="1">Transiently phosphorylated on a His residue during the reaction cycle. Phosphorylation strongly increases the affinity for substrates and increases the rate of nicotinate D-ribonucleotide production. Dephosphorylation regenerates the low-affinity form of the enzyme, leading to product release.</text>
</comment>
<comment type="similarity">
    <text evidence="1">Belongs to the NAPRTase family.</text>
</comment>
<name>PNCB_SHIDS</name>